<organism>
    <name type="scientific">African swine fever virus (strain Badajoz 1971 Vero-adapted)</name>
    <name type="common">Ba71V</name>
    <name type="synonym">ASFV</name>
    <dbReference type="NCBI Taxonomy" id="10498"/>
    <lineage>
        <taxon>Viruses</taxon>
        <taxon>Varidnaviria</taxon>
        <taxon>Bamfordvirae</taxon>
        <taxon>Nucleocytoviricota</taxon>
        <taxon>Pokkesviricetes</taxon>
        <taxon>Asfuvirales</taxon>
        <taxon>Asfarviridae</taxon>
        <taxon>Asfivirus</taxon>
        <taxon>African swine fever virus</taxon>
    </lineage>
</organism>
<reference key="1">
    <citation type="journal article" date="1995" name="Virology">
        <title>Analysis of the complete nucleotide sequence of African swine fever virus.</title>
        <authorList>
            <person name="Yanez R.J."/>
            <person name="Rodriguez J.M."/>
            <person name="Nogal M.L."/>
            <person name="Yuste L."/>
            <person name="Enriquez C."/>
            <person name="Rodriguez J.F."/>
            <person name="Vinuela E."/>
        </authorList>
    </citation>
    <scope>NUCLEOTIDE SEQUENCE [LARGE SCALE GENOMIC DNA]</scope>
</reference>
<reference key="2">
    <citation type="journal article" date="2020" name="J. Virol.">
        <title>The African Swine Fever Virus Transcriptome.</title>
        <authorList>
            <person name="Cackett G."/>
            <person name="Matelska D."/>
            <person name="Sykora M."/>
            <person name="Portugal R."/>
            <person name="Malecki M."/>
            <person name="Baehler J."/>
            <person name="Dixon L."/>
            <person name="Werner F."/>
        </authorList>
    </citation>
    <scope>INDUCTION</scope>
</reference>
<reference key="3">
    <citation type="journal article" date="2022" name="Vet. Microbiol.">
        <title>African swine fever virus pE301R negatively regulates cGAS-STING signaling pathway by inhibiting the nuclear translocation of IRF3.</title>
        <authorList>
            <person name="Liu X."/>
            <person name="Liu H."/>
            <person name="Ye G."/>
            <person name="Xue M."/>
            <person name="Yu H."/>
            <person name="Feng C."/>
            <person name="Zhou Q."/>
            <person name="Liu X."/>
            <person name="Zhang L."/>
            <person name="Jiao S."/>
            <person name="Weng C."/>
            <person name="Huang L."/>
        </authorList>
    </citation>
    <scope>FUNCTION</scope>
    <scope>INTERACTION WITH HOST IRF3</scope>
    <scope>SUBCELLULAR LOCATION</scope>
</reference>
<organismHost>
    <name type="scientific">Ornithodoros</name>
    <name type="common">relapsing fever ticks</name>
    <dbReference type="NCBI Taxonomy" id="6937"/>
</organismHost>
<organismHost>
    <name type="scientific">Sus scrofa</name>
    <name type="common">Pig</name>
    <dbReference type="NCBI Taxonomy" id="9823"/>
</organismHost>
<protein>
    <recommendedName>
        <fullName>Uncharacterized protein E301R</fullName>
    </recommendedName>
</protein>
<keyword id="KW-0002">3D-structure</keyword>
<keyword id="KW-0945">Host-virus interaction</keyword>
<keyword id="KW-1090">Inhibition of host innate immune response by virus</keyword>
<keyword id="KW-1092">Inhibition of host IRF3 by virus</keyword>
<keyword id="KW-1113">Inhibition of host RLR pathway by virus</keyword>
<keyword id="KW-0426">Late protein</keyword>
<keyword id="KW-1185">Reference proteome</keyword>
<keyword id="KW-0899">Viral immunoevasion</keyword>
<evidence type="ECO:0000269" key="1">
    <source>
    </source>
</evidence>
<evidence type="ECO:0000269" key="2">
    <source>
    </source>
</evidence>
<evidence type="ECO:0000305" key="3"/>
<evidence type="ECO:0007829" key="4">
    <source>
        <dbReference type="PDB" id="8I6G"/>
    </source>
</evidence>
<gene>
    <name type="ordered locus">Ba71V-128</name>
    <name type="ORF">E301R</name>
</gene>
<comment type="function">
    <text evidence="2">Plays a role in the inhibition of host innate immune system by acting as a negatively regulator of type I interferon production. Mechanistically, interacts with and prevents host IRF3 nuclear localization to inhibit its transcriptional activity.</text>
</comment>
<comment type="subunit">
    <text evidence="2">Interacts with host IRF3.</text>
</comment>
<comment type="induction">
    <text evidence="1">Expressed in the late phase of the viral replicative cycle.</text>
</comment>
<comment type="miscellaneous">
    <text>Shares some weak sequence similarity with PCNA (Proliferating cell nuclear antigen).</text>
</comment>
<comment type="similarity">
    <text evidence="3">Belongs to the asfivirus E301R family.</text>
</comment>
<sequence length="301" mass="35254">MSEDIRRGPGRPPKKRVVPNFERKGILEKPVRPQSRLEFSYDNPLIFKNLFIYFKNLKSKNILVRCTPTEITFFSRDQSQASFVIATIDGKNVNHYYASDVFWLGINRELVEKMFNSIDRSFLKITIVHRYDKPETLFFIFTDFDIDKECTYQITVSEPELDMDLIEMEKSISEERLKNYPLRWEFTSKQLKKTFSDLSNYTELVTIEKLGGDTPLHLYFQKFNSISYHEMYKSSNKINLTSTIPKSQVFQINVKIAHIKSLASAMVTDKIRILCEENGNLIFQSEMDALMLNTITLNNTI</sequence>
<accession>Q65196</accession>
<name>VF301_ASFB7</name>
<feature type="chain" id="PRO_0000373629" description="Uncharacterized protein E301R">
    <location>
        <begin position="1"/>
        <end position="301"/>
    </location>
</feature>
<feature type="strand" evidence="4">
    <location>
        <begin position="31"/>
        <end position="42"/>
    </location>
</feature>
<feature type="helix" evidence="4">
    <location>
        <begin position="45"/>
        <end position="56"/>
    </location>
</feature>
<feature type="strand" evidence="4">
    <location>
        <begin position="61"/>
        <end position="66"/>
    </location>
</feature>
<feature type="strand" evidence="4">
    <location>
        <begin position="68"/>
        <end position="76"/>
    </location>
</feature>
<feature type="strand" evidence="4">
    <location>
        <begin position="82"/>
        <end position="89"/>
    </location>
</feature>
<feature type="helix" evidence="4">
    <location>
        <begin position="90"/>
        <end position="92"/>
    </location>
</feature>
<feature type="strand" evidence="4">
    <location>
        <begin position="93"/>
        <end position="100"/>
    </location>
</feature>
<feature type="strand" evidence="4">
    <location>
        <begin position="102"/>
        <end position="107"/>
    </location>
</feature>
<feature type="helix" evidence="4">
    <location>
        <begin position="108"/>
        <end position="116"/>
    </location>
</feature>
<feature type="strand" evidence="4">
    <location>
        <begin position="124"/>
        <end position="130"/>
    </location>
</feature>
<feature type="strand" evidence="4">
    <location>
        <begin position="136"/>
        <end position="143"/>
    </location>
</feature>
<feature type="turn" evidence="4">
    <location>
        <begin position="144"/>
        <end position="147"/>
    </location>
</feature>
<feature type="strand" evidence="4">
    <location>
        <begin position="148"/>
        <end position="155"/>
    </location>
</feature>
<feature type="helix" evidence="4">
    <location>
        <begin position="163"/>
        <end position="167"/>
    </location>
</feature>
<feature type="helix" evidence="4">
    <location>
        <begin position="168"/>
        <end position="172"/>
    </location>
</feature>
<feature type="turn" evidence="4">
    <location>
        <begin position="174"/>
        <end position="176"/>
    </location>
</feature>
<feature type="strand" evidence="4">
    <location>
        <begin position="182"/>
        <end position="187"/>
    </location>
</feature>
<feature type="helix" evidence="4">
    <location>
        <begin position="188"/>
        <end position="199"/>
    </location>
</feature>
<feature type="strand" evidence="4">
    <location>
        <begin position="203"/>
        <end position="213"/>
    </location>
</feature>
<feature type="strand" evidence="4">
    <location>
        <begin position="216"/>
        <end position="222"/>
    </location>
</feature>
<feature type="turn" evidence="4">
    <location>
        <begin position="223"/>
        <end position="225"/>
    </location>
</feature>
<feature type="strand" evidence="4">
    <location>
        <begin position="226"/>
        <end position="232"/>
    </location>
</feature>
<feature type="helix" evidence="4">
    <location>
        <begin position="235"/>
        <end position="238"/>
    </location>
</feature>
<feature type="strand" evidence="4">
    <location>
        <begin position="249"/>
        <end position="255"/>
    </location>
</feature>
<feature type="helix" evidence="4">
    <location>
        <begin position="257"/>
        <end position="264"/>
    </location>
</feature>
<feature type="strand" evidence="4">
    <location>
        <begin position="268"/>
        <end position="275"/>
    </location>
</feature>
<feature type="strand" evidence="4">
    <location>
        <begin position="281"/>
        <end position="287"/>
    </location>
</feature>
<feature type="strand" evidence="4">
    <location>
        <begin position="290"/>
        <end position="296"/>
    </location>
</feature>
<proteinExistence type="evidence at protein level"/>
<dbReference type="EMBL" id="U18466">
    <property type="protein sequence ID" value="AAA65356.1"/>
    <property type="molecule type" value="Genomic_DNA"/>
</dbReference>
<dbReference type="RefSeq" id="NP_042820.1">
    <property type="nucleotide sequence ID" value="NC_001659.2"/>
</dbReference>
<dbReference type="PDB" id="8I6G">
    <property type="method" value="X-ray"/>
    <property type="resolution" value="1.79 A"/>
    <property type="chains" value="A/B=1-301"/>
</dbReference>
<dbReference type="PDB" id="8I6H">
    <property type="method" value="X-ray"/>
    <property type="resolution" value="2.29 A"/>
    <property type="chains" value="A/B=1-301"/>
</dbReference>
<dbReference type="PDB" id="8ITE">
    <property type="method" value="X-ray"/>
    <property type="resolution" value="2.10 A"/>
    <property type="chains" value="A=1-301"/>
</dbReference>
<dbReference type="PDBsum" id="8I6G"/>
<dbReference type="PDBsum" id="8I6H"/>
<dbReference type="PDBsum" id="8ITE"/>
<dbReference type="SMR" id="Q65196"/>
<dbReference type="GeneID" id="22220356"/>
<dbReference type="KEGG" id="vg:22220356"/>
<dbReference type="Proteomes" id="UP000000624">
    <property type="component" value="Segment"/>
</dbReference>
<dbReference type="GO" id="GO:0039548">
    <property type="term" value="P:symbiont-mediated suppression of host cytoplasmic pattern recognition receptor signaling pathway via inhibition of IRF3 activity"/>
    <property type="evidence" value="ECO:0007669"/>
    <property type="project" value="UniProtKB-KW"/>
</dbReference>
<dbReference type="Gene3D" id="3.70.10.10">
    <property type="match status" value="1"/>
</dbReference>
<dbReference type="InterPro" id="IPR046938">
    <property type="entry name" value="DNA_clamp_sf"/>
</dbReference>
<dbReference type="SUPFAM" id="SSF55979">
    <property type="entry name" value="DNA clamp"/>
    <property type="match status" value="1"/>
</dbReference>